<gene>
    <name evidence="1" type="primary">fucI</name>
    <name type="ordered locus">ECED1_3255</name>
</gene>
<evidence type="ECO:0000255" key="1">
    <source>
        <dbReference type="HAMAP-Rule" id="MF_01254"/>
    </source>
</evidence>
<name>FUCI_ECO81</name>
<comment type="function">
    <text evidence="1">Converts the aldose L-fucose into the corresponding ketose L-fuculose.</text>
</comment>
<comment type="catalytic activity">
    <reaction evidence="1">
        <text>L-fucose = L-fuculose</text>
        <dbReference type="Rhea" id="RHEA:17233"/>
        <dbReference type="ChEBI" id="CHEBI:2181"/>
        <dbReference type="ChEBI" id="CHEBI:17617"/>
        <dbReference type="EC" id="5.3.1.25"/>
    </reaction>
</comment>
<comment type="cofactor">
    <cofactor evidence="1">
        <name>Mn(2+)</name>
        <dbReference type="ChEBI" id="CHEBI:29035"/>
    </cofactor>
</comment>
<comment type="pathway">
    <text evidence="1">Carbohydrate degradation; L-fucose degradation; L-lactaldehyde and glycerone phosphate from L-fucose: step 1/3.</text>
</comment>
<comment type="subunit">
    <text evidence="1">Homohexamer.</text>
</comment>
<comment type="subcellular location">
    <subcellularLocation>
        <location evidence="1">Cytoplasm</location>
    </subcellularLocation>
</comment>
<comment type="similarity">
    <text evidence="1">Belongs to the L-fucose isomerase family.</text>
</comment>
<sequence length="591" mass="64990">MKKISLPKIGIRPVIDGRRMGVRESLEEQTMNMAKATAALLTEKLRHACGAAVECVISDTCIAGMAEAAACEEKFSSQNVGLTITVTPCWCYGSETIDMDPTRPKAIWGFNGTERPGAVYLAAALAAHSQKGIPAFSIYGHDVQDADDTSIPADVEEKLLRFARAGLAVASMKGKSYLSLGGVSMGIAGSIVDHNFFESWLGMKVQAVDMTELRRRIDQKIYDEAELEMALAWADKNFRYGEDENNKQYQRNAEQSRAVLRESLLMAMCIRDMMQGNSKLADIGRVEESLGYNAIAAGFQGQRHWTDQYPNGDTAEAILNSSFDWNGVRKPFVVATENDSLNGVAMLMGHQLTGTAQVFADVRTYWSPEAIERVTGHKLDGLAEHGIIHLINSGSAALDGSCKQRDSEGKPTMKPHWEISQQEADACLAATEWCPAIHEYFRGGGYSSRFLTEGGVPFTMTRVNIIKGLGPVLQIAEGWSVELPKDVHDILNKRTNSTWPTTWFAPRLTGKGPFTDVYSVMANWGANHGVLTIGHVGADFITLASMLRIPVCMHNVEETKVYRPSAWAAHGMDIEGQDYRACQNYGPLYKR</sequence>
<dbReference type="EC" id="5.3.1.25" evidence="1"/>
<dbReference type="EMBL" id="CU928162">
    <property type="protein sequence ID" value="CAR09415.2"/>
    <property type="molecule type" value="Genomic_DNA"/>
</dbReference>
<dbReference type="RefSeq" id="WP_000724161.1">
    <property type="nucleotide sequence ID" value="NC_011745.1"/>
</dbReference>
<dbReference type="SMR" id="B7MZ98"/>
<dbReference type="KEGG" id="ecq:ECED1_3255"/>
<dbReference type="HOGENOM" id="CLU_033326_1_0_6"/>
<dbReference type="UniPathway" id="UPA00563">
    <property type="reaction ID" value="UER00624"/>
</dbReference>
<dbReference type="Proteomes" id="UP000000748">
    <property type="component" value="Chromosome"/>
</dbReference>
<dbReference type="GO" id="GO:0005737">
    <property type="term" value="C:cytoplasm"/>
    <property type="evidence" value="ECO:0007669"/>
    <property type="project" value="UniProtKB-SubCell"/>
</dbReference>
<dbReference type="GO" id="GO:0008790">
    <property type="term" value="F:arabinose isomerase activity"/>
    <property type="evidence" value="ECO:0007669"/>
    <property type="project" value="TreeGrafter"/>
</dbReference>
<dbReference type="GO" id="GO:0008736">
    <property type="term" value="F:L-fucose isomerase activity"/>
    <property type="evidence" value="ECO:0007669"/>
    <property type="project" value="UniProtKB-UniRule"/>
</dbReference>
<dbReference type="GO" id="GO:0030145">
    <property type="term" value="F:manganese ion binding"/>
    <property type="evidence" value="ECO:0007669"/>
    <property type="project" value="UniProtKB-UniRule"/>
</dbReference>
<dbReference type="GO" id="GO:0019571">
    <property type="term" value="P:D-arabinose catabolic process"/>
    <property type="evidence" value="ECO:0007669"/>
    <property type="project" value="TreeGrafter"/>
</dbReference>
<dbReference type="GO" id="GO:0042355">
    <property type="term" value="P:L-fucose catabolic process"/>
    <property type="evidence" value="ECO:0007669"/>
    <property type="project" value="UniProtKB-UniRule"/>
</dbReference>
<dbReference type="CDD" id="cd03556">
    <property type="entry name" value="L-fucose_isomerase"/>
    <property type="match status" value="1"/>
</dbReference>
<dbReference type="FunFam" id="3.20.14.10:FF:000001">
    <property type="entry name" value="L-fucose isomerase"/>
    <property type="match status" value="1"/>
</dbReference>
<dbReference type="FunFam" id="3.40.275.10:FF:000001">
    <property type="entry name" value="L-fucose isomerase"/>
    <property type="match status" value="1"/>
</dbReference>
<dbReference type="FunFam" id="3.40.50.1070:FF:000001">
    <property type="entry name" value="L-fucose isomerase"/>
    <property type="match status" value="1"/>
</dbReference>
<dbReference type="Gene3D" id="3.40.50.1070">
    <property type="match status" value="1"/>
</dbReference>
<dbReference type="Gene3D" id="3.40.275.10">
    <property type="entry name" value="L-fucose Isomerase, Chain A, domain 2"/>
    <property type="match status" value="1"/>
</dbReference>
<dbReference type="Gene3D" id="3.20.14.10">
    <property type="entry name" value="L-fucose/L-arabinose isomerase, C-terminal"/>
    <property type="match status" value="1"/>
</dbReference>
<dbReference type="HAMAP" id="MF_01254">
    <property type="entry name" value="Fucose_iso"/>
    <property type="match status" value="1"/>
</dbReference>
<dbReference type="InterPro" id="IPR004216">
    <property type="entry name" value="Fuc/Ara_isomerase_C"/>
</dbReference>
<dbReference type="InterPro" id="IPR038393">
    <property type="entry name" value="Fuc_iso_dom3_sf"/>
</dbReference>
<dbReference type="InterPro" id="IPR015888">
    <property type="entry name" value="Fuc_isomerase_C"/>
</dbReference>
<dbReference type="InterPro" id="IPR038391">
    <property type="entry name" value="Fucose_iso_dom1_sf"/>
</dbReference>
<dbReference type="InterPro" id="IPR012888">
    <property type="entry name" value="Fucose_iso_N1"/>
</dbReference>
<dbReference type="InterPro" id="IPR005763">
    <property type="entry name" value="Fucose_isomerase"/>
</dbReference>
<dbReference type="InterPro" id="IPR038392">
    <property type="entry name" value="Fucose_isomerase_dom2_sf"/>
</dbReference>
<dbReference type="InterPro" id="IPR009015">
    <property type="entry name" value="Fucose_isomerase_N/cen_sf"/>
</dbReference>
<dbReference type="InterPro" id="IPR012889">
    <property type="entry name" value="Fucose_isomerase_N2"/>
</dbReference>
<dbReference type="NCBIfam" id="TIGR01089">
    <property type="entry name" value="fucI"/>
    <property type="match status" value="1"/>
</dbReference>
<dbReference type="NCBIfam" id="NF008220">
    <property type="entry name" value="PRK10991.1"/>
    <property type="match status" value="1"/>
</dbReference>
<dbReference type="PANTHER" id="PTHR37840">
    <property type="entry name" value="L-FUCOSE ISOMERASE"/>
    <property type="match status" value="1"/>
</dbReference>
<dbReference type="PANTHER" id="PTHR37840:SF1">
    <property type="entry name" value="L-FUCOSE ISOMERASE"/>
    <property type="match status" value="1"/>
</dbReference>
<dbReference type="Pfam" id="PF02952">
    <property type="entry name" value="Fucose_iso_C"/>
    <property type="match status" value="1"/>
</dbReference>
<dbReference type="Pfam" id="PF07881">
    <property type="entry name" value="Fucose_iso_N1"/>
    <property type="match status" value="1"/>
</dbReference>
<dbReference type="Pfam" id="PF07882">
    <property type="entry name" value="Fucose_iso_N2"/>
    <property type="match status" value="1"/>
</dbReference>
<dbReference type="SUPFAM" id="SSF50443">
    <property type="entry name" value="FucI/AraA C-terminal domain-like"/>
    <property type="match status" value="1"/>
</dbReference>
<dbReference type="SUPFAM" id="SSF53743">
    <property type="entry name" value="FucI/AraA N-terminal and middle domains"/>
    <property type="match status" value="1"/>
</dbReference>
<reference key="1">
    <citation type="journal article" date="2009" name="PLoS Genet.">
        <title>Organised genome dynamics in the Escherichia coli species results in highly diverse adaptive paths.</title>
        <authorList>
            <person name="Touchon M."/>
            <person name="Hoede C."/>
            <person name="Tenaillon O."/>
            <person name="Barbe V."/>
            <person name="Baeriswyl S."/>
            <person name="Bidet P."/>
            <person name="Bingen E."/>
            <person name="Bonacorsi S."/>
            <person name="Bouchier C."/>
            <person name="Bouvet O."/>
            <person name="Calteau A."/>
            <person name="Chiapello H."/>
            <person name="Clermont O."/>
            <person name="Cruveiller S."/>
            <person name="Danchin A."/>
            <person name="Diard M."/>
            <person name="Dossat C."/>
            <person name="Karoui M.E."/>
            <person name="Frapy E."/>
            <person name="Garry L."/>
            <person name="Ghigo J.M."/>
            <person name="Gilles A.M."/>
            <person name="Johnson J."/>
            <person name="Le Bouguenec C."/>
            <person name="Lescat M."/>
            <person name="Mangenot S."/>
            <person name="Martinez-Jehanne V."/>
            <person name="Matic I."/>
            <person name="Nassif X."/>
            <person name="Oztas S."/>
            <person name="Petit M.A."/>
            <person name="Pichon C."/>
            <person name="Rouy Z."/>
            <person name="Ruf C.S."/>
            <person name="Schneider D."/>
            <person name="Tourret J."/>
            <person name="Vacherie B."/>
            <person name="Vallenet D."/>
            <person name="Medigue C."/>
            <person name="Rocha E.P.C."/>
            <person name="Denamur E."/>
        </authorList>
    </citation>
    <scope>NUCLEOTIDE SEQUENCE [LARGE SCALE GENOMIC DNA]</scope>
    <source>
        <strain>ED1a</strain>
    </source>
</reference>
<keyword id="KW-0119">Carbohydrate metabolism</keyword>
<keyword id="KW-0963">Cytoplasm</keyword>
<keyword id="KW-0294">Fucose metabolism</keyword>
<keyword id="KW-0413">Isomerase</keyword>
<keyword id="KW-0464">Manganese</keyword>
<keyword id="KW-0479">Metal-binding</keyword>
<protein>
    <recommendedName>
        <fullName evidence="1">L-fucose isomerase</fullName>
        <ecNumber evidence="1">5.3.1.25</ecNumber>
    </recommendedName>
    <alternativeName>
        <fullName evidence="1">6-deoxy-L-galactose isomerase</fullName>
    </alternativeName>
    <alternativeName>
        <fullName>FucIase</fullName>
    </alternativeName>
</protein>
<proteinExistence type="inferred from homology"/>
<organism>
    <name type="scientific">Escherichia coli O81 (strain ED1a)</name>
    <dbReference type="NCBI Taxonomy" id="585397"/>
    <lineage>
        <taxon>Bacteria</taxon>
        <taxon>Pseudomonadati</taxon>
        <taxon>Pseudomonadota</taxon>
        <taxon>Gammaproteobacteria</taxon>
        <taxon>Enterobacterales</taxon>
        <taxon>Enterobacteriaceae</taxon>
        <taxon>Escherichia</taxon>
    </lineage>
</organism>
<feature type="chain" id="PRO_1000165095" description="L-fucose isomerase">
    <location>
        <begin position="1"/>
        <end position="591"/>
    </location>
</feature>
<feature type="active site" description="Proton acceptor" evidence="1">
    <location>
        <position position="337"/>
    </location>
</feature>
<feature type="active site" description="Proton acceptor" evidence="1">
    <location>
        <position position="361"/>
    </location>
</feature>
<feature type="binding site" evidence="1">
    <location>
        <position position="337"/>
    </location>
    <ligand>
        <name>Mn(2+)</name>
        <dbReference type="ChEBI" id="CHEBI:29035"/>
    </ligand>
</feature>
<feature type="binding site" evidence="1">
    <location>
        <position position="361"/>
    </location>
    <ligand>
        <name>Mn(2+)</name>
        <dbReference type="ChEBI" id="CHEBI:29035"/>
    </ligand>
</feature>
<feature type="binding site" evidence="1">
    <location>
        <position position="528"/>
    </location>
    <ligand>
        <name>Mn(2+)</name>
        <dbReference type="ChEBI" id="CHEBI:29035"/>
    </ligand>
</feature>
<accession>B7MZ98</accession>